<sequence>MEEYQGYLELDRFRQHDFLYPLIFREYSYALAHGHGLNRYMLLENIGYDNKSSLLIVKRLITTMYQQNYLIISANDSKQNPFFGYNKNLHSKILSEGFAIIVEIPFYLRLISSLEGAEIVRFYNLRSIHSIFPFLEEKFPHLNYSADILIPYPAHLEILVQTLRYRVKDASYLHLLRFFLHEYSNCNSLIITNKSLSIFSKSNPRFFLFLYNSYICEYESIFLFLRNQSSHLRLTSSGILFERLCLYRKIEHFAEVFANDFTGIPCFLKDPFMHYVRYQGKSILASKDTPLLMNKCKSYLVNLWQCHFDVWSHAASIRINQLSKHSLDFLSYLSSVRRNPAVVRNQMLENSFLLNNAPNKLDTIVPIIPLIGSLAKAKFCNAVGHPISKLTRADLSDFEIINRFLHICRNLSHYYSGSSKKKNMYRIKYILRLSCVKTLARKHKSTARAFLKRVDSEFFQEFFTEEGGFISLIFPRASFALRRLYSGRVWYLDIIFINGLSNHE</sequence>
<dbReference type="EMBL" id="AB125035">
    <property type="protein sequence ID" value="BAD14098.1"/>
    <property type="molecule type" value="Genomic_DNA"/>
</dbReference>
<dbReference type="GO" id="GO:0009507">
    <property type="term" value="C:chloroplast"/>
    <property type="evidence" value="ECO:0007669"/>
    <property type="project" value="UniProtKB-SubCell"/>
</dbReference>
<dbReference type="GO" id="GO:0003723">
    <property type="term" value="F:RNA binding"/>
    <property type="evidence" value="ECO:0007669"/>
    <property type="project" value="UniProtKB-KW"/>
</dbReference>
<dbReference type="GO" id="GO:0006397">
    <property type="term" value="P:mRNA processing"/>
    <property type="evidence" value="ECO:0007669"/>
    <property type="project" value="UniProtKB-KW"/>
</dbReference>
<dbReference type="GO" id="GO:0008380">
    <property type="term" value="P:RNA splicing"/>
    <property type="evidence" value="ECO:0007669"/>
    <property type="project" value="UniProtKB-UniRule"/>
</dbReference>
<dbReference type="GO" id="GO:0008033">
    <property type="term" value="P:tRNA processing"/>
    <property type="evidence" value="ECO:0007669"/>
    <property type="project" value="UniProtKB-KW"/>
</dbReference>
<dbReference type="HAMAP" id="MF_01390">
    <property type="entry name" value="MatK"/>
    <property type="match status" value="1"/>
</dbReference>
<dbReference type="InterPro" id="IPR024937">
    <property type="entry name" value="Domain_X"/>
</dbReference>
<dbReference type="InterPro" id="IPR002866">
    <property type="entry name" value="Maturase_MatK"/>
</dbReference>
<dbReference type="InterPro" id="IPR024942">
    <property type="entry name" value="Maturase_MatK_N"/>
</dbReference>
<dbReference type="PANTHER" id="PTHR34811">
    <property type="entry name" value="MATURASE K"/>
    <property type="match status" value="1"/>
</dbReference>
<dbReference type="PANTHER" id="PTHR34811:SF1">
    <property type="entry name" value="MATURASE K"/>
    <property type="match status" value="1"/>
</dbReference>
<dbReference type="Pfam" id="PF01348">
    <property type="entry name" value="Intron_maturas2"/>
    <property type="match status" value="1"/>
</dbReference>
<dbReference type="Pfam" id="PF01824">
    <property type="entry name" value="MatK_N"/>
    <property type="match status" value="1"/>
</dbReference>
<geneLocation type="chloroplast"/>
<name>MATK_QUECO</name>
<reference key="1">
    <citation type="journal article" date="2003" name="Tropics">
        <title>Phylogeny and genetic variation of Fagaceae in tropical montane forests.</title>
        <authorList>
            <person name="Kamiya K."/>
            <person name="Harada K."/>
            <person name="Ogino K."/>
            <person name="Mahani M.C."/>
            <person name="Latiff A."/>
        </authorList>
    </citation>
    <scope>NUCLEOTIDE SEQUENCE [GENOMIC DNA]</scope>
</reference>
<proteinExistence type="inferred from homology"/>
<organism>
    <name type="scientific">Quercus coccifera</name>
    <name type="common">Kermes oak</name>
    <dbReference type="NCBI Taxonomy" id="58335"/>
    <lineage>
        <taxon>Eukaryota</taxon>
        <taxon>Viridiplantae</taxon>
        <taxon>Streptophyta</taxon>
        <taxon>Embryophyta</taxon>
        <taxon>Tracheophyta</taxon>
        <taxon>Spermatophyta</taxon>
        <taxon>Magnoliopsida</taxon>
        <taxon>eudicotyledons</taxon>
        <taxon>Gunneridae</taxon>
        <taxon>Pentapetalae</taxon>
        <taxon>rosids</taxon>
        <taxon>fabids</taxon>
        <taxon>Fagales</taxon>
        <taxon>Fagaceae</taxon>
        <taxon>Quercus</taxon>
    </lineage>
</organism>
<keyword id="KW-0150">Chloroplast</keyword>
<keyword id="KW-0507">mRNA processing</keyword>
<keyword id="KW-0934">Plastid</keyword>
<keyword id="KW-0694">RNA-binding</keyword>
<keyword id="KW-0819">tRNA processing</keyword>
<gene>
    <name evidence="1" type="primary">matK</name>
</gene>
<protein>
    <recommendedName>
        <fullName evidence="1">Maturase K</fullName>
    </recommendedName>
    <alternativeName>
        <fullName evidence="1">Intron maturase</fullName>
    </alternativeName>
</protein>
<comment type="function">
    <text evidence="1">Usually encoded in the trnK tRNA gene intron. Probably assists in splicing its own and other chloroplast group II introns.</text>
</comment>
<comment type="subcellular location">
    <subcellularLocation>
        <location>Plastid</location>
        <location>Chloroplast</location>
    </subcellularLocation>
</comment>
<comment type="similarity">
    <text evidence="1">Belongs to the intron maturase 2 family. MatK subfamily.</text>
</comment>
<evidence type="ECO:0000255" key="1">
    <source>
        <dbReference type="HAMAP-Rule" id="MF_01390"/>
    </source>
</evidence>
<feature type="chain" id="PRO_0000143660" description="Maturase K">
    <location>
        <begin position="1"/>
        <end position="504"/>
    </location>
</feature>
<accession>Q75VB4</accession>